<comment type="function">
    <text evidence="1">Ornithine decarboxylase (ODC) antizyme protein that negatively regulates ODC activity and intracellular polyamine biosynthesis in response to increased intracellular polyamine levels. Binds to ODC monomers, inhibiting the assembly of the functional ODC homodimer, and targets the monomers for ubiquitin-independent proteolytic destruction by the 26S proteasome.</text>
</comment>
<comment type="subunit">
    <text evidence="1">Interacts with ODC and thereby sterically blocks ODC homodimerization.</text>
</comment>
<comment type="alternative products">
    <event type="ribosomal frameshifting"/>
    <isoform>
        <id>Q6FJC4-1</id>
        <name>1</name>
        <sequence type="displayed"/>
    </isoform>
    <text>A ribosomal frameshift occurs between the codons for Ala-63 and Asp-64. An autoregulatory mechanism enables modulation of frameshifting according to the cellular concentration of polyamines.</text>
</comment>
<comment type="similarity">
    <text evidence="2">Belongs to the ODC antizyme family.</text>
</comment>
<protein>
    <recommendedName>
        <fullName>Ornithine decarboxylase antizyme</fullName>
    </recommendedName>
</protein>
<proteinExistence type="inferred from homology"/>
<keyword id="KW-1185">Reference proteome</keyword>
<keyword id="KW-0688">Ribosomal frameshifting</keyword>
<dbReference type="EMBL" id="CR380959">
    <property type="protein sequence ID" value="CAG62646.1"/>
    <property type="status" value="ALT_SEQ"/>
    <property type="molecule type" value="Genomic_DNA"/>
</dbReference>
<dbReference type="RefSeq" id="XP_449670.1">
    <property type="nucleotide sequence ID" value="XM_449670.1"/>
</dbReference>
<dbReference type="FunCoup" id="Q6FJC4">
    <property type="interactions" value="32"/>
</dbReference>
<dbReference type="GeneID" id="2891719"/>
<dbReference type="KEGG" id="cgr:2891719"/>
<dbReference type="eggNOG" id="ENOG502RZPH">
    <property type="taxonomic scope" value="Eukaryota"/>
</dbReference>
<dbReference type="HOGENOM" id="CLU_087076_0_0_1"/>
<dbReference type="InParanoid" id="Q6FJC4"/>
<dbReference type="Proteomes" id="UP000002428">
    <property type="component" value="Chromosome M"/>
</dbReference>
<dbReference type="GO" id="GO:0008073">
    <property type="term" value="F:ornithine decarboxylase inhibitor activity"/>
    <property type="evidence" value="ECO:0007669"/>
    <property type="project" value="InterPro"/>
</dbReference>
<dbReference type="GO" id="GO:0075523">
    <property type="term" value="P:viral translational frameshifting"/>
    <property type="evidence" value="ECO:0007669"/>
    <property type="project" value="UniProtKB-KW"/>
</dbReference>
<dbReference type="InterPro" id="IPR016181">
    <property type="entry name" value="Acyl_CoA_acyltransferase"/>
</dbReference>
<dbReference type="InterPro" id="IPR002993">
    <property type="entry name" value="ODC_AZ"/>
</dbReference>
<dbReference type="Pfam" id="PF02100">
    <property type="entry name" value="ODC_AZ"/>
    <property type="match status" value="1"/>
</dbReference>
<dbReference type="SUPFAM" id="SSF55729">
    <property type="entry name" value="Acyl-CoA N-acyltransferases (Nat)"/>
    <property type="match status" value="1"/>
</dbReference>
<feature type="chain" id="PRO_0000220867" description="Ornithine decarboxylase antizyme">
    <location>
        <begin position="1"/>
        <end position="255"/>
    </location>
</feature>
<organism>
    <name type="scientific">Candida glabrata (strain ATCC 2001 / BCRC 20586 / JCM 3761 / NBRC 0622 / NRRL Y-65 / CBS 138)</name>
    <name type="common">Yeast</name>
    <name type="synonym">Nakaseomyces glabratus</name>
    <dbReference type="NCBI Taxonomy" id="284593"/>
    <lineage>
        <taxon>Eukaryota</taxon>
        <taxon>Fungi</taxon>
        <taxon>Dikarya</taxon>
        <taxon>Ascomycota</taxon>
        <taxon>Saccharomycotina</taxon>
        <taxon>Saccharomycetes</taxon>
        <taxon>Saccharomycetales</taxon>
        <taxon>Saccharomycetaceae</taxon>
        <taxon>Nakaseomyces</taxon>
    </lineage>
</organism>
<reference key="1">
    <citation type="journal article" date="2004" name="Nature">
        <title>Genome evolution in yeasts.</title>
        <authorList>
            <person name="Dujon B."/>
            <person name="Sherman D."/>
            <person name="Fischer G."/>
            <person name="Durrens P."/>
            <person name="Casaregola S."/>
            <person name="Lafontaine I."/>
            <person name="de Montigny J."/>
            <person name="Marck C."/>
            <person name="Neuveglise C."/>
            <person name="Talla E."/>
            <person name="Goffard N."/>
            <person name="Frangeul L."/>
            <person name="Aigle M."/>
            <person name="Anthouard V."/>
            <person name="Babour A."/>
            <person name="Barbe V."/>
            <person name="Barnay S."/>
            <person name="Blanchin S."/>
            <person name="Beckerich J.-M."/>
            <person name="Beyne E."/>
            <person name="Bleykasten C."/>
            <person name="Boisrame A."/>
            <person name="Boyer J."/>
            <person name="Cattolico L."/>
            <person name="Confanioleri F."/>
            <person name="de Daruvar A."/>
            <person name="Despons L."/>
            <person name="Fabre E."/>
            <person name="Fairhead C."/>
            <person name="Ferry-Dumazet H."/>
            <person name="Groppi A."/>
            <person name="Hantraye F."/>
            <person name="Hennequin C."/>
            <person name="Jauniaux N."/>
            <person name="Joyet P."/>
            <person name="Kachouri R."/>
            <person name="Kerrest A."/>
            <person name="Koszul R."/>
            <person name="Lemaire M."/>
            <person name="Lesur I."/>
            <person name="Ma L."/>
            <person name="Muller H."/>
            <person name="Nicaud J.-M."/>
            <person name="Nikolski M."/>
            <person name="Oztas S."/>
            <person name="Ozier-Kalogeropoulos O."/>
            <person name="Pellenz S."/>
            <person name="Potier S."/>
            <person name="Richard G.-F."/>
            <person name="Straub M.-L."/>
            <person name="Suleau A."/>
            <person name="Swennen D."/>
            <person name="Tekaia F."/>
            <person name="Wesolowski-Louvel M."/>
            <person name="Westhof E."/>
            <person name="Wirth B."/>
            <person name="Zeniou-Meyer M."/>
            <person name="Zivanovic Y."/>
            <person name="Bolotin-Fukuhara M."/>
            <person name="Thierry A."/>
            <person name="Bouchier C."/>
            <person name="Caudron B."/>
            <person name="Scarpelli C."/>
            <person name="Gaillardin C."/>
            <person name="Weissenbach J."/>
            <person name="Wincker P."/>
            <person name="Souciet J.-L."/>
        </authorList>
    </citation>
    <scope>NUCLEOTIDE SEQUENCE [LARGE SCALE GENOMIC DNA]</scope>
    <source>
        <strain>ATCC 2001 / BCRC 20586 / JCM 3761 / NBRC 0622 / NRRL Y-65 / CBS 138</strain>
    </source>
</reference>
<name>OAZ_CANGA</name>
<gene>
    <name type="primary">OAZ1</name>
    <name type="ordered locus">CAGL0M07403g</name>
</gene>
<accession>Q6FJC4</accession>
<evidence type="ECO:0000250" key="1">
    <source>
        <dbReference type="UniProtKB" id="Q02803"/>
    </source>
</evidence>
<evidence type="ECO:0000305" key="2"/>
<sequence length="255" mass="29846">MEKKVSHVIDFLSNDEVQRQLGDPSISGISFSFDIRTLLKKHSGGNPQFFNYSMRDSFHEWCADIELGANTNELVTELLWDIIYLTEHQFLLPYYHGEHKKFQKKLVKRVGNHLNSLVNNSASKPTGSMTVNVRHVWRNVGDRYTLLYLPLYFKELIWCKANGSIFHVIIPHTKEHVIHEHKEWLLAILEMAGYWNLSHVRLYLPRDDLTNIQTLLKNLHWIGANLLPNENRNECNENDDITLSDETYIILECEC</sequence>